<proteinExistence type="predicted"/>
<feature type="chain" id="PRO_0000107249" description="Uncharacterized protein MJ1281">
    <location>
        <begin position="1"/>
        <end position="1048"/>
    </location>
</feature>
<feature type="region of interest" description="Disordered" evidence="1">
    <location>
        <begin position="601"/>
        <end position="629"/>
    </location>
</feature>
<feature type="compositionally biased region" description="Low complexity" evidence="1">
    <location>
        <begin position="605"/>
        <end position="621"/>
    </location>
</feature>
<dbReference type="EMBL" id="L77117">
    <property type="protein sequence ID" value="AAB99287.1"/>
    <property type="molecule type" value="Genomic_DNA"/>
</dbReference>
<dbReference type="PIR" id="H64459">
    <property type="entry name" value="H64459"/>
</dbReference>
<dbReference type="STRING" id="243232.MJ_1281"/>
<dbReference type="PaxDb" id="243232-MJ_1281"/>
<dbReference type="EnsemblBacteria" id="AAB99287">
    <property type="protein sequence ID" value="AAB99287"/>
    <property type="gene ID" value="MJ_1281"/>
</dbReference>
<dbReference type="KEGG" id="mja:MJ_1281"/>
<dbReference type="eggNOG" id="arCOG08205">
    <property type="taxonomic scope" value="Archaea"/>
</dbReference>
<dbReference type="eggNOG" id="arCOG09753">
    <property type="taxonomic scope" value="Archaea"/>
</dbReference>
<dbReference type="HOGENOM" id="CLU_292822_0_0_2"/>
<dbReference type="InParanoid" id="Q58677"/>
<dbReference type="Proteomes" id="UP000000805">
    <property type="component" value="Chromosome"/>
</dbReference>
<protein>
    <recommendedName>
        <fullName>Uncharacterized protein MJ1281</fullName>
    </recommendedName>
</protein>
<organism>
    <name type="scientific">Methanocaldococcus jannaschii (strain ATCC 43067 / DSM 2661 / JAL-1 / JCM 10045 / NBRC 100440)</name>
    <name type="common">Methanococcus jannaschii</name>
    <dbReference type="NCBI Taxonomy" id="243232"/>
    <lineage>
        <taxon>Archaea</taxon>
        <taxon>Methanobacteriati</taxon>
        <taxon>Methanobacteriota</taxon>
        <taxon>Methanomada group</taxon>
        <taxon>Methanococci</taxon>
        <taxon>Methanococcales</taxon>
        <taxon>Methanocaldococcaceae</taxon>
        <taxon>Methanocaldococcus</taxon>
    </lineage>
</organism>
<reference key="1">
    <citation type="journal article" date="1996" name="Science">
        <title>Complete genome sequence of the methanogenic archaeon, Methanococcus jannaschii.</title>
        <authorList>
            <person name="Bult C.J."/>
            <person name="White O."/>
            <person name="Olsen G.J."/>
            <person name="Zhou L."/>
            <person name="Fleischmann R.D."/>
            <person name="Sutton G.G."/>
            <person name="Blake J.A."/>
            <person name="FitzGerald L.M."/>
            <person name="Clayton R.A."/>
            <person name="Gocayne J.D."/>
            <person name="Kerlavage A.R."/>
            <person name="Dougherty B.A."/>
            <person name="Tomb J.-F."/>
            <person name="Adams M.D."/>
            <person name="Reich C.I."/>
            <person name="Overbeek R."/>
            <person name="Kirkness E.F."/>
            <person name="Weinstock K.G."/>
            <person name="Merrick J.M."/>
            <person name="Glodek A."/>
            <person name="Scott J.L."/>
            <person name="Geoghagen N.S.M."/>
            <person name="Weidman J.F."/>
            <person name="Fuhrmann J.L."/>
            <person name="Nguyen D."/>
            <person name="Utterback T.R."/>
            <person name="Kelley J.M."/>
            <person name="Peterson J.D."/>
            <person name="Sadow P.W."/>
            <person name="Hanna M.C."/>
            <person name="Cotton M.D."/>
            <person name="Roberts K.M."/>
            <person name="Hurst M.A."/>
            <person name="Kaine B.P."/>
            <person name="Borodovsky M."/>
            <person name="Klenk H.-P."/>
            <person name="Fraser C.M."/>
            <person name="Smith H.O."/>
            <person name="Woese C.R."/>
            <person name="Venter J.C."/>
        </authorList>
    </citation>
    <scope>NUCLEOTIDE SEQUENCE [LARGE SCALE GENOMIC DNA]</scope>
    <source>
        <strain>ATCC 43067 / DSM 2661 / JAL-1 / JCM 10045 / NBRC 100440</strain>
    </source>
</reference>
<gene>
    <name type="ordered locus">MJ1281</name>
</gene>
<name>Y1281_METJA</name>
<keyword id="KW-1185">Reference proteome</keyword>
<accession>Q58677</accession>
<evidence type="ECO:0000256" key="1">
    <source>
        <dbReference type="SAM" id="MobiDB-lite"/>
    </source>
</evidence>
<sequence length="1048" mass="121015">MMILWKRQRTLLKMLLMTLIMEETTTIKEEVFFMKKFVIILTISIAVLFAGCVSEEGSYEESKISEKSISSPLDIVPKSSEKVVYTKTEGFVDLLGENSEIVNAYKELIGKYGLSVDDIEYTIQADNTYVLKGYGLDEYKFMDELGLDYKEEKYNGANMLINENHNYAVAKYKNYLIHGNTEDVKRVIDTIKGDYPSITEKKEIKDMLSKVDDDYVIANIGRNYKGYYGAFIYLKGRNVEFDVVAVYNDVDDAKEQYEYVKEELEDELDNGNIKDYDIDRDGNIVVAKVIMSKEEFLGDYANKLGLNFGNEIKYNTENEYNTQTKEKSEFNHDNTNKVNKNINLEEPYNLIPNVFWASYVDVGKFSKVVKGKGVYDELNSILKCYGLSPDDVEFYMNLETANLIKTDKLTAKEYLKKLGYSYNEEYYGGATLLVYTTEVSDMVGKFAATNYKGYFIFGLKGGVEKVIDAINGKNNLVTEDENIREIINEMPKGYFAFKLYNQFDADGGEFYYDEGDKIVIKGLWICIDDEYAKKRKYIIENDYENYGYTDYNIEVDGNRVTTTLTIDKDEFGEYDGYTLVSSDWIGLKKLENCENVNEEEENQINEEQQTNVENEQQTEQQFENEDKETNTYELPLTWKELEVAGMDGVMFDFGNKKVTFEDWKYSPCEFRNPIIIDGNKIWCFGFSGGEYGYFTYNDNMGFDADVDDIILIEMPYNVKAVCDDFYGAGWFIEDDNGKLHHVIFDCPKETIMDKTGNVEIDLAKIKKDVVVANVDVDELMAGAEDNKNNYKIVIGWKGNKLYLITMEKDKFEDWAYNSKYEDGFDEPFPPVQIKEFEFNGNIIDARSDFRNYIIVATENGLYIITVYKREPDEFKITDSLKTNIECYAFDTGSGLLVYYDGSKVYYTDIKIKSESDNSDIYYIARNYEGGLNIDGVTGLSICHNYNWLGTQVEVAGDGWIKTYNIEFEAKKDAEGNSVYDENGNSIYIVKFEPKNVYYDEIYDKYYSISVPFAGKYIYRGDSGDSKNGRVEFRVYTTNNKLYLFGTNW</sequence>